<feature type="chain" id="PRO_0000237707" description="2-C-methyl-D-erythritol 2,4-cyclodiphosphate synthase">
    <location>
        <begin position="1"/>
        <end position="159"/>
    </location>
</feature>
<feature type="binding site" evidence="1">
    <location>
        <begin position="10"/>
        <end position="12"/>
    </location>
    <ligand>
        <name>4-CDP-2-C-methyl-D-erythritol 2-phosphate</name>
        <dbReference type="ChEBI" id="CHEBI:57919"/>
    </ligand>
</feature>
<feature type="binding site" evidence="1">
    <location>
        <position position="10"/>
    </location>
    <ligand>
        <name>a divalent metal cation</name>
        <dbReference type="ChEBI" id="CHEBI:60240"/>
    </ligand>
</feature>
<feature type="binding site" evidence="1">
    <location>
        <position position="12"/>
    </location>
    <ligand>
        <name>a divalent metal cation</name>
        <dbReference type="ChEBI" id="CHEBI:60240"/>
    </ligand>
</feature>
<feature type="binding site" evidence="1">
    <location>
        <begin position="36"/>
        <end position="37"/>
    </location>
    <ligand>
        <name>4-CDP-2-C-methyl-D-erythritol 2-phosphate</name>
        <dbReference type="ChEBI" id="CHEBI:57919"/>
    </ligand>
</feature>
<feature type="binding site" evidence="1">
    <location>
        <position position="44"/>
    </location>
    <ligand>
        <name>a divalent metal cation</name>
        <dbReference type="ChEBI" id="CHEBI:60240"/>
    </ligand>
</feature>
<feature type="binding site" evidence="1">
    <location>
        <begin position="58"/>
        <end position="60"/>
    </location>
    <ligand>
        <name>4-CDP-2-C-methyl-D-erythritol 2-phosphate</name>
        <dbReference type="ChEBI" id="CHEBI:57919"/>
    </ligand>
</feature>
<feature type="binding site" evidence="1">
    <location>
        <begin position="134"/>
        <end position="137"/>
    </location>
    <ligand>
        <name>4-CDP-2-C-methyl-D-erythritol 2-phosphate</name>
        <dbReference type="ChEBI" id="CHEBI:57919"/>
    </ligand>
</feature>
<feature type="binding site" evidence="1">
    <location>
        <position position="141"/>
    </location>
    <ligand>
        <name>4-CDP-2-C-methyl-D-erythritol 2-phosphate</name>
        <dbReference type="ChEBI" id="CHEBI:57919"/>
    </ligand>
</feature>
<feature type="binding site" evidence="1">
    <location>
        <position position="144"/>
    </location>
    <ligand>
        <name>4-CDP-2-C-methyl-D-erythritol 2-phosphate</name>
        <dbReference type="ChEBI" id="CHEBI:57919"/>
    </ligand>
</feature>
<feature type="site" description="Transition state stabilizer" evidence="1">
    <location>
        <position position="36"/>
    </location>
</feature>
<feature type="site" description="Transition state stabilizer" evidence="1">
    <location>
        <position position="135"/>
    </location>
</feature>
<comment type="function">
    <text evidence="1">Involved in the biosynthesis of isopentenyl diphosphate (IPP) and dimethylallyl diphosphate (DMAPP), two major building blocks of isoprenoid compounds. Catalyzes the conversion of 4-diphosphocytidyl-2-C-methyl-D-erythritol 2-phosphate (CDP-ME2P) to 2-C-methyl-D-erythritol 2,4-cyclodiphosphate (ME-CPP) with a corresponding release of cytidine 5-monophosphate (CMP).</text>
</comment>
<comment type="catalytic activity">
    <reaction evidence="1">
        <text>4-CDP-2-C-methyl-D-erythritol 2-phosphate = 2-C-methyl-D-erythritol 2,4-cyclic diphosphate + CMP</text>
        <dbReference type="Rhea" id="RHEA:23864"/>
        <dbReference type="ChEBI" id="CHEBI:57919"/>
        <dbReference type="ChEBI" id="CHEBI:58483"/>
        <dbReference type="ChEBI" id="CHEBI:60377"/>
        <dbReference type="EC" id="4.6.1.12"/>
    </reaction>
</comment>
<comment type="cofactor">
    <cofactor evidence="1">
        <name>a divalent metal cation</name>
        <dbReference type="ChEBI" id="CHEBI:60240"/>
    </cofactor>
    <text evidence="1">Binds 1 divalent metal cation per subunit.</text>
</comment>
<comment type="pathway">
    <text evidence="1">Isoprenoid biosynthesis; isopentenyl diphosphate biosynthesis via DXP pathway; isopentenyl diphosphate from 1-deoxy-D-xylulose 5-phosphate: step 4/6.</text>
</comment>
<comment type="subunit">
    <text evidence="1">Homotrimer.</text>
</comment>
<comment type="similarity">
    <text evidence="1">Belongs to the IspF family.</text>
</comment>
<keyword id="KW-0414">Isoprene biosynthesis</keyword>
<keyword id="KW-0456">Lyase</keyword>
<keyword id="KW-0479">Metal-binding</keyword>
<dbReference type="EC" id="4.6.1.12" evidence="1"/>
<dbReference type="EMBL" id="CR626927">
    <property type="protein sequence ID" value="CAH09460.1"/>
    <property type="molecule type" value="Genomic_DNA"/>
</dbReference>
<dbReference type="RefSeq" id="WP_005782445.1">
    <property type="nucleotide sequence ID" value="NZ_UFTH01000001.1"/>
</dbReference>
<dbReference type="SMR" id="Q5L8X2"/>
<dbReference type="PaxDb" id="272559-BF9343_3679"/>
<dbReference type="GeneID" id="60366021"/>
<dbReference type="KEGG" id="bfs:BF9343_3679"/>
<dbReference type="eggNOG" id="COG0245">
    <property type="taxonomic scope" value="Bacteria"/>
</dbReference>
<dbReference type="HOGENOM" id="CLU_084630_2_0_10"/>
<dbReference type="UniPathway" id="UPA00056">
    <property type="reaction ID" value="UER00095"/>
</dbReference>
<dbReference type="Proteomes" id="UP000006731">
    <property type="component" value="Chromosome"/>
</dbReference>
<dbReference type="GO" id="GO:0008685">
    <property type="term" value="F:2-C-methyl-D-erythritol 2,4-cyclodiphosphate synthase activity"/>
    <property type="evidence" value="ECO:0007669"/>
    <property type="project" value="UniProtKB-UniRule"/>
</dbReference>
<dbReference type="GO" id="GO:0046872">
    <property type="term" value="F:metal ion binding"/>
    <property type="evidence" value="ECO:0007669"/>
    <property type="project" value="UniProtKB-KW"/>
</dbReference>
<dbReference type="GO" id="GO:0019288">
    <property type="term" value="P:isopentenyl diphosphate biosynthetic process, methylerythritol 4-phosphate pathway"/>
    <property type="evidence" value="ECO:0007669"/>
    <property type="project" value="UniProtKB-UniRule"/>
</dbReference>
<dbReference type="GO" id="GO:0016114">
    <property type="term" value="P:terpenoid biosynthetic process"/>
    <property type="evidence" value="ECO:0007669"/>
    <property type="project" value="InterPro"/>
</dbReference>
<dbReference type="CDD" id="cd00554">
    <property type="entry name" value="MECDP_synthase"/>
    <property type="match status" value="1"/>
</dbReference>
<dbReference type="FunFam" id="3.30.1330.50:FF:000001">
    <property type="entry name" value="2-C-methyl-D-erythritol 2,4-cyclodiphosphate synthase"/>
    <property type="match status" value="1"/>
</dbReference>
<dbReference type="Gene3D" id="3.30.1330.50">
    <property type="entry name" value="2-C-methyl-D-erythritol 2,4-cyclodiphosphate synthase"/>
    <property type="match status" value="1"/>
</dbReference>
<dbReference type="HAMAP" id="MF_00107">
    <property type="entry name" value="IspF"/>
    <property type="match status" value="1"/>
</dbReference>
<dbReference type="InterPro" id="IPR003526">
    <property type="entry name" value="MECDP_synthase"/>
</dbReference>
<dbReference type="InterPro" id="IPR020555">
    <property type="entry name" value="MECDP_synthase_CS"/>
</dbReference>
<dbReference type="InterPro" id="IPR036571">
    <property type="entry name" value="MECDP_synthase_sf"/>
</dbReference>
<dbReference type="NCBIfam" id="TIGR00151">
    <property type="entry name" value="ispF"/>
    <property type="match status" value="1"/>
</dbReference>
<dbReference type="PANTHER" id="PTHR43181">
    <property type="entry name" value="2-C-METHYL-D-ERYTHRITOL 2,4-CYCLODIPHOSPHATE SYNTHASE, CHLOROPLASTIC"/>
    <property type="match status" value="1"/>
</dbReference>
<dbReference type="PANTHER" id="PTHR43181:SF1">
    <property type="entry name" value="2-C-METHYL-D-ERYTHRITOL 2,4-CYCLODIPHOSPHATE SYNTHASE, CHLOROPLASTIC"/>
    <property type="match status" value="1"/>
</dbReference>
<dbReference type="Pfam" id="PF02542">
    <property type="entry name" value="YgbB"/>
    <property type="match status" value="1"/>
</dbReference>
<dbReference type="SUPFAM" id="SSF69765">
    <property type="entry name" value="IpsF-like"/>
    <property type="match status" value="1"/>
</dbReference>
<dbReference type="PROSITE" id="PS01350">
    <property type="entry name" value="ISPF"/>
    <property type="match status" value="1"/>
</dbReference>
<proteinExistence type="inferred from homology"/>
<accession>Q5L8X2</accession>
<evidence type="ECO:0000255" key="1">
    <source>
        <dbReference type="HAMAP-Rule" id="MF_00107"/>
    </source>
</evidence>
<name>ISPF_BACFN</name>
<organism>
    <name type="scientific">Bacteroides fragilis (strain ATCC 25285 / DSM 2151 / CCUG 4856 / JCM 11019 / LMG 10263 / NCTC 9343 / Onslow / VPI 2553 / EN-2)</name>
    <dbReference type="NCBI Taxonomy" id="272559"/>
    <lineage>
        <taxon>Bacteria</taxon>
        <taxon>Pseudomonadati</taxon>
        <taxon>Bacteroidota</taxon>
        <taxon>Bacteroidia</taxon>
        <taxon>Bacteroidales</taxon>
        <taxon>Bacteroidaceae</taxon>
        <taxon>Bacteroides</taxon>
    </lineage>
</organism>
<sequence length="159" mass="17328">MKIKVGFGFDVHQLVEGRELWLGGILLEHEKGLLGHSDADVLVHAICDALLGAANMRDIGYHFPDNAGEYKNIDSKILLKKTVELIATKGYQIGNIDATICAERPKLKAHIPSMQQVLAEVMGIDADDISIKATTTEKLGFTGREEGISAYATVLINRV</sequence>
<gene>
    <name evidence="1" type="primary">ispF</name>
    <name type="synonym">mecS</name>
    <name type="ordered locus">BF3780</name>
</gene>
<protein>
    <recommendedName>
        <fullName evidence="1">2-C-methyl-D-erythritol 2,4-cyclodiphosphate synthase</fullName>
        <shortName evidence="1">MECDP-synthase</shortName>
        <shortName evidence="1">MECPP-synthase</shortName>
        <shortName evidence="1">MECPS</shortName>
        <ecNumber evidence="1">4.6.1.12</ecNumber>
    </recommendedName>
</protein>
<reference key="1">
    <citation type="journal article" date="2005" name="Science">
        <title>Extensive DNA inversions in the B. fragilis genome control variable gene expression.</title>
        <authorList>
            <person name="Cerdeno-Tarraga A.-M."/>
            <person name="Patrick S."/>
            <person name="Crossman L.C."/>
            <person name="Blakely G."/>
            <person name="Abratt V."/>
            <person name="Lennard N."/>
            <person name="Poxton I."/>
            <person name="Duerden B."/>
            <person name="Harris B."/>
            <person name="Quail M.A."/>
            <person name="Barron A."/>
            <person name="Clark L."/>
            <person name="Corton C."/>
            <person name="Doggett J."/>
            <person name="Holden M.T.G."/>
            <person name="Larke N."/>
            <person name="Line A."/>
            <person name="Lord A."/>
            <person name="Norbertczak H."/>
            <person name="Ormond D."/>
            <person name="Price C."/>
            <person name="Rabbinowitsch E."/>
            <person name="Woodward J."/>
            <person name="Barrell B.G."/>
            <person name="Parkhill J."/>
        </authorList>
    </citation>
    <scope>NUCLEOTIDE SEQUENCE [LARGE SCALE GENOMIC DNA]</scope>
    <source>
        <strain>ATCC 25285 / DSM 2151 / CCUG 4856 / JCM 11019 / LMG 10263 / NCTC 9343 / Onslow / VPI 2553 / EN-2</strain>
    </source>
</reference>